<name>RL25_DICNV</name>
<reference key="1">
    <citation type="journal article" date="2007" name="Nat. Biotechnol.">
        <title>Genome sequence and identification of candidate vaccine antigens from the animal pathogen Dichelobacter nodosus.</title>
        <authorList>
            <person name="Myers G.S.A."/>
            <person name="Parker D."/>
            <person name="Al-Hasani K."/>
            <person name="Kennan R.M."/>
            <person name="Seemann T."/>
            <person name="Ren Q."/>
            <person name="Badger J.H."/>
            <person name="Selengut J.D."/>
            <person name="Deboy R.T."/>
            <person name="Tettelin H."/>
            <person name="Boyce J.D."/>
            <person name="McCarl V.P."/>
            <person name="Han X."/>
            <person name="Nelson W.C."/>
            <person name="Madupu R."/>
            <person name="Mohamoud Y."/>
            <person name="Holley T."/>
            <person name="Fedorova N."/>
            <person name="Khouri H."/>
            <person name="Bottomley S.P."/>
            <person name="Whittington R.J."/>
            <person name="Adler B."/>
            <person name="Songer J.G."/>
            <person name="Rood J.I."/>
            <person name="Paulsen I.T."/>
        </authorList>
    </citation>
    <scope>NUCLEOTIDE SEQUENCE [LARGE SCALE GENOMIC DNA]</scope>
    <source>
        <strain>VCS1703A</strain>
    </source>
</reference>
<sequence>MAEQKYRYTLHAVVREEQGKGASRRLRRQGLVPAIIYGGNTEPQAIAIKQDELKKNAKNHSFFSQIINLKIDGQEDQEILVRDVQHHIYKPLFQHFDFQRIVRGQEITATVLLEFVGEERAPGIKTDGGIVSRHMTTVEVICRPSLLPEYIAVDLSEANIGDIITLADLKLPEGVRLVGDMEDEEFAATVVVQISYPQREEQMEDTDTAAADEEGDKEEDADKQE</sequence>
<evidence type="ECO:0000255" key="1">
    <source>
        <dbReference type="HAMAP-Rule" id="MF_01334"/>
    </source>
</evidence>
<evidence type="ECO:0000256" key="2">
    <source>
        <dbReference type="SAM" id="MobiDB-lite"/>
    </source>
</evidence>
<evidence type="ECO:0000305" key="3"/>
<gene>
    <name evidence="1" type="primary">rplY</name>
    <name evidence="1" type="synonym">ctc</name>
    <name type="ordered locus">DNO_0064</name>
</gene>
<keyword id="KW-1185">Reference proteome</keyword>
<keyword id="KW-0687">Ribonucleoprotein</keyword>
<keyword id="KW-0689">Ribosomal protein</keyword>
<keyword id="KW-0694">RNA-binding</keyword>
<keyword id="KW-0699">rRNA-binding</keyword>
<feature type="chain" id="PRO_1000073297" description="Large ribosomal subunit protein bL25">
    <location>
        <begin position="1"/>
        <end position="225"/>
    </location>
</feature>
<feature type="region of interest" description="Disordered" evidence="2">
    <location>
        <begin position="197"/>
        <end position="225"/>
    </location>
</feature>
<feature type="compositionally biased region" description="Acidic residues" evidence="2">
    <location>
        <begin position="202"/>
        <end position="225"/>
    </location>
</feature>
<comment type="function">
    <text evidence="1">This is one of the proteins that binds to the 5S RNA in the ribosome where it forms part of the central protuberance.</text>
</comment>
<comment type="subunit">
    <text evidence="1">Part of the 50S ribosomal subunit; part of the 5S rRNA/L5/L18/L25 subcomplex. Contacts the 5S rRNA. Binds to the 5S rRNA independently of L5 and L18.</text>
</comment>
<comment type="similarity">
    <text evidence="1">Belongs to the bacterial ribosomal protein bL25 family. CTC subfamily.</text>
</comment>
<accession>A5EWV0</accession>
<organism>
    <name type="scientific">Dichelobacter nodosus (strain VCS1703A)</name>
    <dbReference type="NCBI Taxonomy" id="246195"/>
    <lineage>
        <taxon>Bacteria</taxon>
        <taxon>Pseudomonadati</taxon>
        <taxon>Pseudomonadota</taxon>
        <taxon>Gammaproteobacteria</taxon>
        <taxon>Cardiobacteriales</taxon>
        <taxon>Cardiobacteriaceae</taxon>
        <taxon>Dichelobacter</taxon>
    </lineage>
</organism>
<dbReference type="EMBL" id="CP000513">
    <property type="protein sequence ID" value="ABQ13129.1"/>
    <property type="molecule type" value="Genomic_DNA"/>
</dbReference>
<dbReference type="RefSeq" id="WP_011927817.1">
    <property type="nucleotide sequence ID" value="NC_009446.1"/>
</dbReference>
<dbReference type="SMR" id="A5EWV0"/>
<dbReference type="STRING" id="246195.DNO_0064"/>
<dbReference type="KEGG" id="dno:DNO_0064"/>
<dbReference type="eggNOG" id="COG1825">
    <property type="taxonomic scope" value="Bacteria"/>
</dbReference>
<dbReference type="HOGENOM" id="CLU_075939_0_1_6"/>
<dbReference type="OrthoDB" id="9806411at2"/>
<dbReference type="Proteomes" id="UP000000248">
    <property type="component" value="Chromosome"/>
</dbReference>
<dbReference type="GO" id="GO:0022625">
    <property type="term" value="C:cytosolic large ribosomal subunit"/>
    <property type="evidence" value="ECO:0007669"/>
    <property type="project" value="TreeGrafter"/>
</dbReference>
<dbReference type="GO" id="GO:0008097">
    <property type="term" value="F:5S rRNA binding"/>
    <property type="evidence" value="ECO:0007669"/>
    <property type="project" value="InterPro"/>
</dbReference>
<dbReference type="GO" id="GO:0003735">
    <property type="term" value="F:structural constituent of ribosome"/>
    <property type="evidence" value="ECO:0007669"/>
    <property type="project" value="InterPro"/>
</dbReference>
<dbReference type="GO" id="GO:0006412">
    <property type="term" value="P:translation"/>
    <property type="evidence" value="ECO:0007669"/>
    <property type="project" value="UniProtKB-UniRule"/>
</dbReference>
<dbReference type="CDD" id="cd00495">
    <property type="entry name" value="Ribosomal_L25_TL5_CTC"/>
    <property type="match status" value="1"/>
</dbReference>
<dbReference type="FunFam" id="2.40.240.10:FF:000002">
    <property type="entry name" value="50S ribosomal protein L25"/>
    <property type="match status" value="1"/>
</dbReference>
<dbReference type="Gene3D" id="2.170.120.20">
    <property type="entry name" value="Ribosomal protein L25, beta domain"/>
    <property type="match status" value="1"/>
</dbReference>
<dbReference type="Gene3D" id="2.40.240.10">
    <property type="entry name" value="Ribosomal Protein L25, Chain P"/>
    <property type="match status" value="1"/>
</dbReference>
<dbReference type="HAMAP" id="MF_01336">
    <property type="entry name" value="Ribosomal_bL25"/>
    <property type="match status" value="1"/>
</dbReference>
<dbReference type="HAMAP" id="MF_01334">
    <property type="entry name" value="Ribosomal_bL25_CTC"/>
    <property type="match status" value="1"/>
</dbReference>
<dbReference type="InterPro" id="IPR020056">
    <property type="entry name" value="Rbsml_bL25/Gln-tRNA_synth_N"/>
</dbReference>
<dbReference type="InterPro" id="IPR011035">
    <property type="entry name" value="Ribosomal_bL25/Gln-tRNA_synth"/>
</dbReference>
<dbReference type="InterPro" id="IPR020057">
    <property type="entry name" value="Ribosomal_bL25_b-dom"/>
</dbReference>
<dbReference type="InterPro" id="IPR037121">
    <property type="entry name" value="Ribosomal_bL25_C"/>
</dbReference>
<dbReference type="InterPro" id="IPR001021">
    <property type="entry name" value="Ribosomal_bL25_long"/>
</dbReference>
<dbReference type="InterPro" id="IPR020055">
    <property type="entry name" value="Ribosomal_bL25_short"/>
</dbReference>
<dbReference type="InterPro" id="IPR029751">
    <property type="entry name" value="Ribosomal_L25_dom"/>
</dbReference>
<dbReference type="InterPro" id="IPR020930">
    <property type="entry name" value="Ribosomal_uL5_bac-type"/>
</dbReference>
<dbReference type="NCBIfam" id="TIGR00731">
    <property type="entry name" value="bL25_bact_ctc"/>
    <property type="match status" value="1"/>
</dbReference>
<dbReference type="NCBIfam" id="NF004128">
    <property type="entry name" value="PRK05618.1-2"/>
    <property type="match status" value="1"/>
</dbReference>
<dbReference type="NCBIfam" id="NF004130">
    <property type="entry name" value="PRK05618.1-5"/>
    <property type="match status" value="1"/>
</dbReference>
<dbReference type="NCBIfam" id="NF004612">
    <property type="entry name" value="PRK05943.1"/>
    <property type="match status" value="1"/>
</dbReference>
<dbReference type="PANTHER" id="PTHR33284">
    <property type="entry name" value="RIBOSOMAL PROTEIN L25/GLN-TRNA SYNTHETASE, ANTI-CODON-BINDING DOMAIN-CONTAINING PROTEIN"/>
    <property type="match status" value="1"/>
</dbReference>
<dbReference type="PANTHER" id="PTHR33284:SF1">
    <property type="entry name" value="RIBOSOMAL PROTEIN L25_GLN-TRNA SYNTHETASE, ANTI-CODON-BINDING DOMAIN-CONTAINING PROTEIN"/>
    <property type="match status" value="1"/>
</dbReference>
<dbReference type="Pfam" id="PF01386">
    <property type="entry name" value="Ribosomal_L25p"/>
    <property type="match status" value="1"/>
</dbReference>
<dbReference type="Pfam" id="PF14693">
    <property type="entry name" value="Ribosomal_TL5_C"/>
    <property type="match status" value="1"/>
</dbReference>
<dbReference type="SUPFAM" id="SSF50715">
    <property type="entry name" value="Ribosomal protein L25-like"/>
    <property type="match status" value="1"/>
</dbReference>
<proteinExistence type="inferred from homology"/>
<protein>
    <recommendedName>
        <fullName evidence="1">Large ribosomal subunit protein bL25</fullName>
    </recommendedName>
    <alternativeName>
        <fullName evidence="3">50S ribosomal protein L25</fullName>
    </alternativeName>
    <alternativeName>
        <fullName evidence="1">General stress protein CTC</fullName>
    </alternativeName>
</protein>